<gene>
    <name type="ordered locus">Os02g0598200</name>
    <name type="ordered locus">LOC_Os02g38470</name>
    <name type="ORF">OJ1212_D02.14</name>
</gene>
<keyword id="KW-0238">DNA-binding</keyword>
<keyword id="KW-0539">Nucleus</keyword>
<keyword id="KW-1185">Reference proteome</keyword>
<keyword id="KW-0677">Repeat</keyword>
<keyword id="KW-0804">Transcription</keyword>
<keyword id="KW-0805">Transcription regulation</keyword>
<organism>
    <name type="scientific">Oryza sativa subsp. japonica</name>
    <name type="common">Rice</name>
    <dbReference type="NCBI Taxonomy" id="39947"/>
    <lineage>
        <taxon>Eukaryota</taxon>
        <taxon>Viridiplantae</taxon>
        <taxon>Streptophyta</taxon>
        <taxon>Embryophyta</taxon>
        <taxon>Tracheophyta</taxon>
        <taxon>Spermatophyta</taxon>
        <taxon>Magnoliopsida</taxon>
        <taxon>Liliopsida</taxon>
        <taxon>Poales</taxon>
        <taxon>Poaceae</taxon>
        <taxon>BOP clade</taxon>
        <taxon>Oryzoideae</taxon>
        <taxon>Oryzeae</taxon>
        <taxon>Oryzinae</taxon>
        <taxon>Oryza</taxon>
        <taxon>Oryza sativa</taxon>
    </lineage>
</organism>
<comment type="subcellular location">
    <subcellularLocation>
        <location evidence="1">Nucleus</location>
    </subcellularLocation>
</comment>
<sequence length="1048" mass="118379">MDGAVRGQGCVGRLRSFNKTKKKNRNCSDDMRNGDDEEKKYSHHDMKNNLRNDANEEKRKSSDDMRDGDFEEKKKCSRHDMKKNLRNDANEEKRKSSDDMRDGDDEEKKCSRQDMKKNLRNDADEEKRKSSDDMRDGDDEEKKKRSRHDMKKNSRNDADEEKRKRKRKCSDDLKKSVVNDASKEATSHSDWRKNRKAGSDAEQRGKKLLNGDKKAKSRKVTTPFFEKMRKIKMQRTSNQNGEKNMKSDGDSYKKTVPLSVNKGKMEKDGTNKRTLSNTLVAKERKMRPSDSMEMKMKKKKRDASFVQPDERTAQTFSTKNKEKKRKAPSTPLKREQKERVASSDNKKETKKACIVAIGNEKKNCRDGKKKKRKAAFAFFKFVRDEFEELLFIPPAVAPSLKDLIDRHVYLEDSEGKCSKIRLSVVDGSLAFYEGWNSFVSEHCIKWGEFLLFEYTPESTFSVRVFGIDSCERLHFSVKSGGKGAVKKRKERHTLSDDLISHYNGQYQDSEDIHDGPNVSGESPRSKEPKITVDAEIGTRNLVAKSINAASETQDSERVESGIGYGSLGALGNKVRNLSNGECDTRSDSVFCIQEKTRRSEVIIISDEAYSTQVDEDTMKQTAPSEASEIHHVTINTQKDLERVVDGVCCESSVALNNKMGNLILGEPKNKNISPACSTEKTNGSEITPTTGVIPLTQENIDTVKLNTLSCFEEDRSTTRESELAAAIPTTSETHDSDKDLGQKHQRNSVQVNSIIAVDKYPNDSEMNISGNIFRIYEAPAGTRCLEKWKRGIVNGRAALDDIGQVRPEKTQKAGEKLVGNCGAMGESPVDLRIESDVTDTCLKPILNIPIEELSILDSVSISKCGRSRTEVNHLFNQKGATVQLQTKKEPLKPTGSSGNRKGDKIAVSVNRVFAHQSELQIPQQENGNFTSCVTPVALLPAKAELLDLDDHSLQFCIPSTIQKWLELPKSLPITCRQKGRYDRNVVILKDPMRRLWPVFYHDKPVFVGFTAGWKPFAAANNLQAGDVCKFVKEMDEDELAFQVYITRK</sequence>
<evidence type="ECO:0000255" key="1">
    <source>
        <dbReference type="PROSITE-ProRule" id="PRU00326"/>
    </source>
</evidence>
<evidence type="ECO:0000256" key="2">
    <source>
        <dbReference type="SAM" id="MobiDB-lite"/>
    </source>
</evidence>
<protein>
    <recommendedName>
        <fullName>B3 domain-containing protein Os02g0598200</fullName>
    </recommendedName>
</protein>
<accession>Q6K5K2</accession>
<accession>A0A0N7KFL7</accession>
<reference key="1">
    <citation type="journal article" date="2005" name="Nature">
        <title>The map-based sequence of the rice genome.</title>
        <authorList>
            <consortium name="International rice genome sequencing project (IRGSP)"/>
        </authorList>
    </citation>
    <scope>NUCLEOTIDE SEQUENCE [LARGE SCALE GENOMIC DNA]</scope>
    <source>
        <strain>cv. Nipponbare</strain>
    </source>
</reference>
<reference key="2">
    <citation type="journal article" date="2008" name="Nucleic Acids Res.">
        <title>The rice annotation project database (RAP-DB): 2008 update.</title>
        <authorList>
            <consortium name="The rice annotation project (RAP)"/>
        </authorList>
    </citation>
    <scope>GENOME REANNOTATION</scope>
    <source>
        <strain>cv. Nipponbare</strain>
    </source>
</reference>
<reference key="3">
    <citation type="journal article" date="2013" name="Rice">
        <title>Improvement of the Oryza sativa Nipponbare reference genome using next generation sequence and optical map data.</title>
        <authorList>
            <person name="Kawahara Y."/>
            <person name="de la Bastide M."/>
            <person name="Hamilton J.P."/>
            <person name="Kanamori H."/>
            <person name="McCombie W.R."/>
            <person name="Ouyang S."/>
            <person name="Schwartz D.C."/>
            <person name="Tanaka T."/>
            <person name="Wu J."/>
            <person name="Zhou S."/>
            <person name="Childs K.L."/>
            <person name="Davidson R.M."/>
            <person name="Lin H."/>
            <person name="Quesada-Ocampo L."/>
            <person name="Vaillancourt B."/>
            <person name="Sakai H."/>
            <person name="Lee S.S."/>
            <person name="Kim J."/>
            <person name="Numa H."/>
            <person name="Itoh T."/>
            <person name="Buell C.R."/>
            <person name="Matsumoto T."/>
        </authorList>
    </citation>
    <scope>GENOME REANNOTATION</scope>
    <source>
        <strain>cv. Nipponbare</strain>
    </source>
</reference>
<reference key="4">
    <citation type="journal article" date="2003" name="Science">
        <title>Collection, mapping, and annotation of over 28,000 cDNA clones from japonica rice.</title>
        <authorList>
            <consortium name="The rice full-length cDNA consortium"/>
        </authorList>
    </citation>
    <scope>NUCLEOTIDE SEQUENCE [LARGE SCALE MRNA]</scope>
    <source>
        <strain>cv. Nipponbare</strain>
    </source>
</reference>
<dbReference type="EMBL" id="AP005384">
    <property type="protein sequence ID" value="BAD22126.1"/>
    <property type="molecule type" value="Genomic_DNA"/>
</dbReference>
<dbReference type="EMBL" id="AP008208">
    <property type="protein sequence ID" value="BAF09244.1"/>
    <property type="molecule type" value="Genomic_DNA"/>
</dbReference>
<dbReference type="EMBL" id="AP014958">
    <property type="protein sequence ID" value="BAS79569.1"/>
    <property type="molecule type" value="Genomic_DNA"/>
</dbReference>
<dbReference type="EMBL" id="AK121990">
    <property type="protein sequence ID" value="BAH00744.1"/>
    <property type="molecule type" value="mRNA"/>
</dbReference>
<dbReference type="RefSeq" id="XP_015624189.1">
    <property type="nucleotide sequence ID" value="XM_015768703.1"/>
</dbReference>
<dbReference type="RefSeq" id="XP_015624190.1">
    <property type="nucleotide sequence ID" value="XM_015768704.1"/>
</dbReference>
<dbReference type="FunCoup" id="Q6K5K2">
    <property type="interactions" value="48"/>
</dbReference>
<dbReference type="STRING" id="39947.Q6K5K2"/>
<dbReference type="PaxDb" id="39947-Q6K5K2"/>
<dbReference type="EnsemblPlants" id="Os02t0598200-02">
    <property type="protein sequence ID" value="Os02t0598200-02"/>
    <property type="gene ID" value="Os02g0598200"/>
</dbReference>
<dbReference type="Gramene" id="Os02t0598200-02">
    <property type="protein sequence ID" value="Os02t0598200-02"/>
    <property type="gene ID" value="Os02g0598200"/>
</dbReference>
<dbReference type="KEGG" id="dosa:Os02g0598200"/>
<dbReference type="eggNOG" id="ENOG502RXIH">
    <property type="taxonomic scope" value="Eukaryota"/>
</dbReference>
<dbReference type="InParanoid" id="Q6K5K2"/>
<dbReference type="OMA" id="RHDMKKN"/>
<dbReference type="OrthoDB" id="635132at2759"/>
<dbReference type="Proteomes" id="UP000000763">
    <property type="component" value="Chromosome 2"/>
</dbReference>
<dbReference type="Proteomes" id="UP000059680">
    <property type="component" value="Chromosome 2"/>
</dbReference>
<dbReference type="ExpressionAtlas" id="Q6K5K2">
    <property type="expression patterns" value="baseline and differential"/>
</dbReference>
<dbReference type="GO" id="GO:0005634">
    <property type="term" value="C:nucleus"/>
    <property type="evidence" value="ECO:0007669"/>
    <property type="project" value="UniProtKB-SubCell"/>
</dbReference>
<dbReference type="GO" id="GO:0003677">
    <property type="term" value="F:DNA binding"/>
    <property type="evidence" value="ECO:0007669"/>
    <property type="project" value="UniProtKB-KW"/>
</dbReference>
<dbReference type="CDD" id="cd10017">
    <property type="entry name" value="B3_DNA"/>
    <property type="match status" value="2"/>
</dbReference>
<dbReference type="Gene3D" id="2.40.330.10">
    <property type="entry name" value="DNA-binding pseudobarrel domain"/>
    <property type="match status" value="2"/>
</dbReference>
<dbReference type="InterPro" id="IPR003340">
    <property type="entry name" value="B3_DNA-bd"/>
</dbReference>
<dbReference type="InterPro" id="IPR015300">
    <property type="entry name" value="DNA-bd_pseudobarrel_sf"/>
</dbReference>
<dbReference type="InterPro" id="IPR044837">
    <property type="entry name" value="REM16-like"/>
</dbReference>
<dbReference type="PANTHER" id="PTHR31391">
    <property type="entry name" value="B3 DOMAIN-CONTAINING PROTEIN OS11G0197600-RELATED"/>
    <property type="match status" value="1"/>
</dbReference>
<dbReference type="PANTHER" id="PTHR31391:SF157">
    <property type="entry name" value="B3 DOMAIN-CONTAINING PROTEIN REM16"/>
    <property type="match status" value="1"/>
</dbReference>
<dbReference type="Pfam" id="PF02362">
    <property type="entry name" value="B3"/>
    <property type="match status" value="2"/>
</dbReference>
<dbReference type="SMART" id="SM01019">
    <property type="entry name" value="B3"/>
    <property type="match status" value="2"/>
</dbReference>
<dbReference type="SUPFAM" id="SSF101936">
    <property type="entry name" value="DNA-binding pseudobarrel domain"/>
    <property type="match status" value="2"/>
</dbReference>
<dbReference type="PROSITE" id="PS50863">
    <property type="entry name" value="B3"/>
    <property type="match status" value="2"/>
</dbReference>
<name>Y2982_ORYSJ</name>
<feature type="chain" id="PRO_0000378044" description="B3 domain-containing protein Os02g0598200">
    <location>
        <begin position="1"/>
        <end position="1048"/>
    </location>
</feature>
<feature type="DNA-binding region" description="TF-B3 1" evidence="1">
    <location>
        <begin position="375"/>
        <end position="468"/>
    </location>
</feature>
<feature type="DNA-binding region" description="TF-B3 2" evidence="1">
    <location>
        <begin position="953"/>
        <end position="1048"/>
    </location>
</feature>
<feature type="region of interest" description="Disordered" evidence="2">
    <location>
        <begin position="1"/>
        <end position="345"/>
    </location>
</feature>
<feature type="region of interest" description="Disordered" evidence="2">
    <location>
        <begin position="505"/>
        <end position="528"/>
    </location>
</feature>
<feature type="compositionally biased region" description="Basic residues" evidence="2">
    <location>
        <begin position="16"/>
        <end position="25"/>
    </location>
</feature>
<feature type="compositionally biased region" description="Basic and acidic residues" evidence="2">
    <location>
        <begin position="26"/>
        <end position="134"/>
    </location>
</feature>
<feature type="compositionally biased region" description="Basic and acidic residues" evidence="2">
    <location>
        <begin position="151"/>
        <end position="162"/>
    </location>
</feature>
<feature type="compositionally biased region" description="Basic and acidic residues" evidence="2">
    <location>
        <begin position="169"/>
        <end position="214"/>
    </location>
</feature>
<feature type="compositionally biased region" description="Basic and acidic residues" evidence="2">
    <location>
        <begin position="243"/>
        <end position="253"/>
    </location>
</feature>
<feature type="compositionally biased region" description="Basic and acidic residues" evidence="2">
    <location>
        <begin position="281"/>
        <end position="295"/>
    </location>
</feature>
<feature type="compositionally biased region" description="Basic and acidic residues" evidence="2">
    <location>
        <begin position="332"/>
        <end position="345"/>
    </location>
</feature>
<proteinExistence type="evidence at transcript level"/>